<organism>
    <name type="scientific">Pelotomaculum thermopropionicum (strain DSM 13744 / JCM 10971 / SI)</name>
    <dbReference type="NCBI Taxonomy" id="370438"/>
    <lineage>
        <taxon>Bacteria</taxon>
        <taxon>Bacillati</taxon>
        <taxon>Bacillota</taxon>
        <taxon>Clostridia</taxon>
        <taxon>Eubacteriales</taxon>
        <taxon>Desulfotomaculaceae</taxon>
        <taxon>Pelotomaculum</taxon>
    </lineage>
</organism>
<evidence type="ECO:0000255" key="1">
    <source>
        <dbReference type="HAMAP-Rule" id="MF_00081"/>
    </source>
</evidence>
<sequence length="348" mass="39560">MKLDDRKQKVLLAIVHDYIATAEPVGSRTIAKKYKLGVSPATIRNEMADLEEMGYIEQPHTSAGRIPSERGYRYYVDYLMKRQELSREEEELIRREYEAKVRDVGQVIQKTGQLLSQLTNYTAVVLSPQIESSRFKYIQLVSMHPSQAMVIVVMDNGIVHNRMIEVPESITCADMETISRVLNAKLRGLTMESIRLTLMKEIYFELARHKHILDLAMELIQDSLLHKVEDKIYLGGVFNMLNQPEFHDVEKVKTLLGILEQEKLLRDLITSGGSEEGVTVRIGGEIMHEDIRECSMVTAPYSVCGRKIGSLGVLGPTRMEYAKVVSVVDFMTKNLSQVLERIVRGTGR</sequence>
<proteinExistence type="inferred from homology"/>
<feature type="chain" id="PRO_1000075290" description="Heat-inducible transcription repressor HrcA">
    <location>
        <begin position="1"/>
        <end position="348"/>
    </location>
</feature>
<comment type="function">
    <text evidence="1">Negative regulator of class I heat shock genes (grpE-dnaK-dnaJ and groELS operons). Prevents heat-shock induction of these operons.</text>
</comment>
<comment type="similarity">
    <text evidence="1">Belongs to the HrcA family.</text>
</comment>
<name>HRCA_PELTS</name>
<protein>
    <recommendedName>
        <fullName evidence="1">Heat-inducible transcription repressor HrcA</fullName>
    </recommendedName>
</protein>
<reference key="1">
    <citation type="journal article" date="2008" name="Genome Res.">
        <title>The genome of Pelotomaculum thermopropionicum reveals niche-associated evolution in anaerobic microbiota.</title>
        <authorList>
            <person name="Kosaka T."/>
            <person name="Kato S."/>
            <person name="Shimoyama T."/>
            <person name="Ishii S."/>
            <person name="Abe T."/>
            <person name="Watanabe K."/>
        </authorList>
    </citation>
    <scope>NUCLEOTIDE SEQUENCE [LARGE SCALE GENOMIC DNA]</scope>
    <source>
        <strain>DSM 13744 / JCM 10971 / SI</strain>
    </source>
</reference>
<accession>A5D3X8</accession>
<keyword id="KW-1185">Reference proteome</keyword>
<keyword id="KW-0678">Repressor</keyword>
<keyword id="KW-0346">Stress response</keyword>
<keyword id="KW-0804">Transcription</keyword>
<keyword id="KW-0805">Transcription regulation</keyword>
<gene>
    <name evidence="1" type="primary">hrcA</name>
    <name type="ordered locus">PTH_0875</name>
</gene>
<dbReference type="EMBL" id="AP009389">
    <property type="protein sequence ID" value="BAF59056.1"/>
    <property type="molecule type" value="Genomic_DNA"/>
</dbReference>
<dbReference type="SMR" id="A5D3X8"/>
<dbReference type="STRING" id="370438.PTH_0875"/>
<dbReference type="KEGG" id="pth:PTH_0875"/>
<dbReference type="eggNOG" id="COG1420">
    <property type="taxonomic scope" value="Bacteria"/>
</dbReference>
<dbReference type="HOGENOM" id="CLU_050019_1_0_9"/>
<dbReference type="Proteomes" id="UP000006556">
    <property type="component" value="Chromosome"/>
</dbReference>
<dbReference type="GO" id="GO:0003677">
    <property type="term" value="F:DNA binding"/>
    <property type="evidence" value="ECO:0007669"/>
    <property type="project" value="InterPro"/>
</dbReference>
<dbReference type="GO" id="GO:0045892">
    <property type="term" value="P:negative regulation of DNA-templated transcription"/>
    <property type="evidence" value="ECO:0007669"/>
    <property type="project" value="UniProtKB-UniRule"/>
</dbReference>
<dbReference type="FunFam" id="1.10.10.10:FF:000049">
    <property type="entry name" value="Heat-inducible transcription repressor HrcA"/>
    <property type="match status" value="1"/>
</dbReference>
<dbReference type="Gene3D" id="3.30.450.40">
    <property type="match status" value="1"/>
</dbReference>
<dbReference type="Gene3D" id="3.30.390.60">
    <property type="entry name" value="Heat-inducible transcription repressor hrca homolog, domain 3"/>
    <property type="match status" value="1"/>
</dbReference>
<dbReference type="Gene3D" id="1.10.10.10">
    <property type="entry name" value="Winged helix-like DNA-binding domain superfamily/Winged helix DNA-binding domain"/>
    <property type="match status" value="1"/>
</dbReference>
<dbReference type="HAMAP" id="MF_00081">
    <property type="entry name" value="HrcA"/>
    <property type="match status" value="1"/>
</dbReference>
<dbReference type="InterPro" id="IPR029016">
    <property type="entry name" value="GAF-like_dom_sf"/>
</dbReference>
<dbReference type="InterPro" id="IPR002571">
    <property type="entry name" value="HrcA"/>
</dbReference>
<dbReference type="InterPro" id="IPR021153">
    <property type="entry name" value="HrcA_C"/>
</dbReference>
<dbReference type="InterPro" id="IPR036388">
    <property type="entry name" value="WH-like_DNA-bd_sf"/>
</dbReference>
<dbReference type="InterPro" id="IPR036390">
    <property type="entry name" value="WH_DNA-bd_sf"/>
</dbReference>
<dbReference type="InterPro" id="IPR023120">
    <property type="entry name" value="WHTH_transcript_rep_HrcA_IDD"/>
</dbReference>
<dbReference type="NCBIfam" id="TIGR00331">
    <property type="entry name" value="hrcA"/>
    <property type="match status" value="1"/>
</dbReference>
<dbReference type="PANTHER" id="PTHR34824">
    <property type="entry name" value="HEAT-INDUCIBLE TRANSCRIPTION REPRESSOR HRCA"/>
    <property type="match status" value="1"/>
</dbReference>
<dbReference type="PANTHER" id="PTHR34824:SF1">
    <property type="entry name" value="HEAT-INDUCIBLE TRANSCRIPTION REPRESSOR HRCA"/>
    <property type="match status" value="1"/>
</dbReference>
<dbReference type="Pfam" id="PF01628">
    <property type="entry name" value="HrcA"/>
    <property type="match status" value="1"/>
</dbReference>
<dbReference type="PIRSF" id="PIRSF005485">
    <property type="entry name" value="HrcA"/>
    <property type="match status" value="1"/>
</dbReference>
<dbReference type="SUPFAM" id="SSF55781">
    <property type="entry name" value="GAF domain-like"/>
    <property type="match status" value="1"/>
</dbReference>
<dbReference type="SUPFAM" id="SSF46785">
    <property type="entry name" value="Winged helix' DNA-binding domain"/>
    <property type="match status" value="1"/>
</dbReference>